<keyword id="KW-0067">ATP-binding</keyword>
<keyword id="KW-0963">Cytoplasm</keyword>
<keyword id="KW-0436">Ligase</keyword>
<keyword id="KW-0547">Nucleotide-binding</keyword>
<keyword id="KW-1185">Reference proteome</keyword>
<organism>
    <name type="scientific">Thermococcus gammatolerans (strain DSM 15229 / JCM 11827 / EJ3)</name>
    <dbReference type="NCBI Taxonomy" id="593117"/>
    <lineage>
        <taxon>Archaea</taxon>
        <taxon>Methanobacteriati</taxon>
        <taxon>Methanobacteriota</taxon>
        <taxon>Thermococci</taxon>
        <taxon>Thermococcales</taxon>
        <taxon>Thermococcaceae</taxon>
        <taxon>Thermococcus</taxon>
    </lineage>
</organism>
<evidence type="ECO:0000255" key="1">
    <source>
        <dbReference type="HAMAP-Rule" id="MF_01908"/>
    </source>
</evidence>
<name>CPGS_THEGJ</name>
<reference key="1">
    <citation type="journal article" date="2007" name="Genome Biol.">
        <title>Genome analysis and genome-wide proteomics of Thermococcus gammatolerans, the most radioresistant organism known amongst the Archaea.</title>
        <authorList>
            <person name="Zivanovic Y."/>
            <person name="Armengaud J."/>
            <person name="Lagorce A."/>
            <person name="Leplat C."/>
            <person name="Guerin P."/>
            <person name="Dutertre M."/>
            <person name="Anthouard V."/>
            <person name="Forterre P."/>
            <person name="Wincker P."/>
            <person name="Confalonieri F."/>
        </authorList>
    </citation>
    <scope>NUCLEOTIDE SEQUENCE [LARGE SCALE GENOMIC DNA]</scope>
    <source>
        <strain>DSM 15229 / JCM 11827 / EJ3</strain>
    </source>
</reference>
<feature type="chain" id="PRO_1000216178" description="Cyclic 2,3-diphosphoglycerate synthetase">
    <location>
        <begin position="1"/>
        <end position="438"/>
    </location>
</feature>
<gene>
    <name evidence="1" type="primary">cpgS</name>
    <name type="ordered locus">TGAM_0725</name>
</gene>
<proteinExistence type="inferred from homology"/>
<comment type="function">
    <text evidence="1">Catalyzes the formation of cyclic 2,3-diphosphoglycerate (cDPG) by formation of an intramolecular phosphoanhydride bond at the expense of ATP.</text>
</comment>
<comment type="catalytic activity">
    <reaction evidence="1">
        <text>(2R)-2,3-bisphosphoglycerate + ATP + H(+) = cyclic (2R)-2,3-bisphosphoglycerate + ADP + phosphate</text>
        <dbReference type="Rhea" id="RHEA:42412"/>
        <dbReference type="ChEBI" id="CHEBI:15378"/>
        <dbReference type="ChEBI" id="CHEBI:30616"/>
        <dbReference type="ChEBI" id="CHEBI:43474"/>
        <dbReference type="ChEBI" id="CHEBI:58248"/>
        <dbReference type="ChEBI" id="CHEBI:79081"/>
        <dbReference type="ChEBI" id="CHEBI:456216"/>
        <dbReference type="EC" id="6.5.1.9"/>
    </reaction>
</comment>
<comment type="subcellular location">
    <subcellularLocation>
        <location evidence="1">Cytoplasm</location>
    </subcellularLocation>
</comment>
<comment type="similarity">
    <text evidence="1">Belongs to the cyclic 2,3-diphosphoglycerate synthetase family.</text>
</comment>
<accession>C5A4R5</accession>
<sequence length="438" mass="47622">MKIALIDGEHYPDVVKWALDKLGNVCCAVFLGGSEKIGSLEEVERRLGVPIYRHDDYLTALARALAENPGVKEVVDLSDEPIVGYEDRFRIASLCLLHGVTYRGADFVFKPRPLNRTSKPSIGVIGTGKRVGKTAVSGFVARTLKAITRPVIVTMGRGGPEEPELIDGEKLEITPEFLLRIAESGRHAASDHFEDALTSRVTTIGCRRCGGGMAGFPFFDAVDRGISLAESLPHDLIILEGSGATFPPYRADAYVVVVGARQELSSIANYFGPFRLSLADLVVVTMADLVKEEKIEKIVGVVEGVIPRAEVHVTVFRPRPLGDVSGKRIGLVMTSEEALESSARHLEALGAEVLHSSGNLSRRKALLRDLEGFSGIEGIAVELKAAAVDVVTRWALERGIEVIYLDNEPVNIDGKNLREAVLRLGKKVLGRRADDTRR</sequence>
<dbReference type="EC" id="6.5.1.9" evidence="1"/>
<dbReference type="EMBL" id="CP001398">
    <property type="protein sequence ID" value="ACS33227.1"/>
    <property type="molecule type" value="Genomic_DNA"/>
</dbReference>
<dbReference type="RefSeq" id="WP_015858345.1">
    <property type="nucleotide sequence ID" value="NC_012804.1"/>
</dbReference>
<dbReference type="SMR" id="C5A4R5"/>
<dbReference type="STRING" id="593117.TGAM_0725"/>
<dbReference type="PaxDb" id="593117-TGAM_0725"/>
<dbReference type="GeneID" id="7987699"/>
<dbReference type="KEGG" id="tga:TGAM_0725"/>
<dbReference type="PATRIC" id="fig|593117.10.peg.725"/>
<dbReference type="eggNOG" id="arCOG01230">
    <property type="taxonomic scope" value="Archaea"/>
</dbReference>
<dbReference type="HOGENOM" id="CLU_638764_0_0_2"/>
<dbReference type="OrthoDB" id="85545at2157"/>
<dbReference type="Proteomes" id="UP000001488">
    <property type="component" value="Chromosome"/>
</dbReference>
<dbReference type="GO" id="GO:0005737">
    <property type="term" value="C:cytoplasm"/>
    <property type="evidence" value="ECO:0007669"/>
    <property type="project" value="UniProtKB-SubCell"/>
</dbReference>
<dbReference type="GO" id="GO:0005524">
    <property type="term" value="F:ATP binding"/>
    <property type="evidence" value="ECO:0007669"/>
    <property type="project" value="UniProtKB-KW"/>
</dbReference>
<dbReference type="GO" id="GO:0036356">
    <property type="term" value="F:cyclic 2,3-diphosphoglycerate synthetase activity"/>
    <property type="evidence" value="ECO:0007669"/>
    <property type="project" value="InterPro"/>
</dbReference>
<dbReference type="GO" id="GO:0016874">
    <property type="term" value="F:ligase activity"/>
    <property type="evidence" value="ECO:0007669"/>
    <property type="project" value="UniProtKB-UniRule"/>
</dbReference>
<dbReference type="GO" id="GO:0006094">
    <property type="term" value="P:gluconeogenesis"/>
    <property type="evidence" value="ECO:0007669"/>
    <property type="project" value="InterPro"/>
</dbReference>
<dbReference type="HAMAP" id="MF_01908">
    <property type="entry name" value="Cyc_PG_syn"/>
    <property type="match status" value="1"/>
</dbReference>
<dbReference type="InterPro" id="IPR016557">
    <property type="entry name" value="Cyc_diphosphoglycerate_synth"/>
</dbReference>
<dbReference type="PIRSF" id="PIRSF009445">
    <property type="entry name" value="Cyc_PG_syn"/>
    <property type="match status" value="1"/>
</dbReference>
<protein>
    <recommendedName>
        <fullName evidence="1">Cyclic 2,3-diphosphoglycerate synthetase</fullName>
        <shortName evidence="1">cDPGS</shortName>
        <ecNumber evidence="1">6.5.1.9</ecNumber>
    </recommendedName>
</protein>